<organism>
    <name type="scientific">Shewanella baltica (strain OS195)</name>
    <dbReference type="NCBI Taxonomy" id="399599"/>
    <lineage>
        <taxon>Bacteria</taxon>
        <taxon>Pseudomonadati</taxon>
        <taxon>Pseudomonadota</taxon>
        <taxon>Gammaproteobacteria</taxon>
        <taxon>Alteromonadales</taxon>
        <taxon>Shewanellaceae</taxon>
        <taxon>Shewanella</taxon>
    </lineage>
</organism>
<comment type="function">
    <text evidence="1">Required for the insertion and/or proper folding and/or complex formation of integral membrane proteins into the membrane. Involved in integration of membrane proteins that insert both dependently and independently of the Sec translocase complex, as well as at least some lipoproteins. Aids folding of multispanning membrane proteins.</text>
</comment>
<comment type="subunit">
    <text evidence="1">Interacts with the Sec translocase complex via SecD. Specifically interacts with transmembrane segments of nascent integral membrane proteins during membrane integration.</text>
</comment>
<comment type="subcellular location">
    <subcellularLocation>
        <location evidence="1">Cell inner membrane</location>
        <topology evidence="1">Multi-pass membrane protein</topology>
    </subcellularLocation>
</comment>
<comment type="similarity">
    <text evidence="1">Belongs to the OXA1/ALB3/YidC family. Type 1 subfamily.</text>
</comment>
<evidence type="ECO:0000255" key="1">
    <source>
        <dbReference type="HAMAP-Rule" id="MF_01810"/>
    </source>
</evidence>
<reference key="1">
    <citation type="submission" date="2007-11" db="EMBL/GenBank/DDBJ databases">
        <title>Complete sequence of chromosome of Shewanella baltica OS195.</title>
        <authorList>
            <consortium name="US DOE Joint Genome Institute"/>
            <person name="Copeland A."/>
            <person name="Lucas S."/>
            <person name="Lapidus A."/>
            <person name="Barry K."/>
            <person name="Glavina del Rio T."/>
            <person name="Dalin E."/>
            <person name="Tice H."/>
            <person name="Pitluck S."/>
            <person name="Chain P."/>
            <person name="Malfatti S."/>
            <person name="Shin M."/>
            <person name="Vergez L."/>
            <person name="Schmutz J."/>
            <person name="Larimer F."/>
            <person name="Land M."/>
            <person name="Hauser L."/>
            <person name="Kyrpides N."/>
            <person name="Kim E."/>
            <person name="Brettar I."/>
            <person name="Rodrigues J."/>
            <person name="Konstantinidis K."/>
            <person name="Klappenbach J."/>
            <person name="Hofle M."/>
            <person name="Tiedje J."/>
            <person name="Richardson P."/>
        </authorList>
    </citation>
    <scope>NUCLEOTIDE SEQUENCE [LARGE SCALE GENOMIC DNA]</scope>
    <source>
        <strain>OS195</strain>
    </source>
</reference>
<protein>
    <recommendedName>
        <fullName evidence="1">Membrane protein insertase YidC</fullName>
    </recommendedName>
    <alternativeName>
        <fullName evidence="1">Foldase YidC</fullName>
    </alternativeName>
    <alternativeName>
        <fullName evidence="1">Membrane integrase YidC</fullName>
    </alternativeName>
    <alternativeName>
        <fullName evidence="1">Membrane protein YidC</fullName>
    </alternativeName>
</protein>
<gene>
    <name evidence="1" type="primary">yidC</name>
    <name type="ordered locus">Sbal195_4521</name>
</gene>
<proteinExistence type="inferred from homology"/>
<feature type="chain" id="PRO_1000088263" description="Membrane protein insertase YidC">
    <location>
        <begin position="1"/>
        <end position="541"/>
    </location>
</feature>
<feature type="transmembrane region" description="Helical" evidence="1">
    <location>
        <begin position="6"/>
        <end position="26"/>
    </location>
</feature>
<feature type="transmembrane region" description="Helical" evidence="1">
    <location>
        <begin position="325"/>
        <end position="345"/>
    </location>
</feature>
<feature type="transmembrane region" description="Helical" evidence="1">
    <location>
        <begin position="349"/>
        <end position="369"/>
    </location>
</feature>
<feature type="transmembrane region" description="Helical" evidence="1">
    <location>
        <begin position="420"/>
        <end position="440"/>
    </location>
</feature>
<feature type="transmembrane region" description="Helical" evidence="1">
    <location>
        <begin position="457"/>
        <end position="477"/>
    </location>
</feature>
<feature type="transmembrane region" description="Helical" evidence="1">
    <location>
        <begin position="500"/>
        <end position="520"/>
    </location>
</feature>
<sequence>MESQRNILLIGLLFVSFLLWQQWQADKAPKPVATESSLVANAANSHSADVPEADTGVPAAVTATSKLITVKTDQLDVQINPIGGDIVFAALVSHKMEQDKDQPFVLLEQTKDFTYIAQSGLIGRDGIDSSAKGRAAFSTAATEYTLAEGQDTLEVPLTYVADNGVTYTKVFVFHRGKFNVDVDYKINNTSAAPLQVQMYGQIKQTIKPSESSMVMPTYRGGAFSTQDVRYEKYKFDDMAKSNLNQATLGGWAAMLQHYFVSAWIPPATDSNTIFSSVSAGGLANIGFRGAVYDIAPGATQEISSQFYVGPKDQKALSAISDTLNLVVDYGFLWWLAVPIHWLLMFYQSFVGNWGLAIILITLTVRGLLFPLTKAQYTSMAKMRNLQPKLTDLKERFGDDRQKMGQAMMELYKKEKVNPMGGCLPIILQMPIFIALYWVLLESFELRHAPFMLWIHDLSVQDPYYILPLLMGVSMFVMQKMQPIAPTMDPMQVKMMQWMPVIFTVFFLWFPAGLVLYWLVGNIVAITQQKIIYAGLAKKGLK</sequence>
<dbReference type="EMBL" id="CP000891">
    <property type="protein sequence ID" value="ABX51678.1"/>
    <property type="molecule type" value="Genomic_DNA"/>
</dbReference>
<dbReference type="RefSeq" id="WP_006084768.1">
    <property type="nucleotide sequence ID" value="NC_009997.1"/>
</dbReference>
<dbReference type="SMR" id="A9KX20"/>
<dbReference type="GeneID" id="11774475"/>
<dbReference type="KEGG" id="sbn:Sbal195_4521"/>
<dbReference type="HOGENOM" id="CLU_016535_3_0_6"/>
<dbReference type="Proteomes" id="UP000000770">
    <property type="component" value="Chromosome"/>
</dbReference>
<dbReference type="GO" id="GO:0005886">
    <property type="term" value="C:plasma membrane"/>
    <property type="evidence" value="ECO:0007669"/>
    <property type="project" value="UniProtKB-SubCell"/>
</dbReference>
<dbReference type="GO" id="GO:0032977">
    <property type="term" value="F:membrane insertase activity"/>
    <property type="evidence" value="ECO:0007669"/>
    <property type="project" value="InterPro"/>
</dbReference>
<dbReference type="GO" id="GO:0051205">
    <property type="term" value="P:protein insertion into membrane"/>
    <property type="evidence" value="ECO:0007669"/>
    <property type="project" value="TreeGrafter"/>
</dbReference>
<dbReference type="GO" id="GO:0015031">
    <property type="term" value="P:protein transport"/>
    <property type="evidence" value="ECO:0007669"/>
    <property type="project" value="UniProtKB-KW"/>
</dbReference>
<dbReference type="CDD" id="cd20070">
    <property type="entry name" value="5TM_YidC_Alb3"/>
    <property type="match status" value="1"/>
</dbReference>
<dbReference type="CDD" id="cd19961">
    <property type="entry name" value="EcYidC-like_peri"/>
    <property type="match status" value="1"/>
</dbReference>
<dbReference type="FunFam" id="2.70.98.90:FF:000004">
    <property type="entry name" value="Membrane protein insertase YidC"/>
    <property type="match status" value="1"/>
</dbReference>
<dbReference type="Gene3D" id="2.70.98.90">
    <property type="match status" value="1"/>
</dbReference>
<dbReference type="HAMAP" id="MF_01810">
    <property type="entry name" value="YidC_type1"/>
    <property type="match status" value="1"/>
</dbReference>
<dbReference type="InterPro" id="IPR019998">
    <property type="entry name" value="Membr_insert_YidC"/>
</dbReference>
<dbReference type="InterPro" id="IPR028053">
    <property type="entry name" value="Membr_insert_YidC_N"/>
</dbReference>
<dbReference type="InterPro" id="IPR001708">
    <property type="entry name" value="YidC/ALB3/OXA1/COX18"/>
</dbReference>
<dbReference type="InterPro" id="IPR028055">
    <property type="entry name" value="YidC/Oxa/ALB_C"/>
</dbReference>
<dbReference type="InterPro" id="IPR047196">
    <property type="entry name" value="YidC_ALB_C"/>
</dbReference>
<dbReference type="InterPro" id="IPR038221">
    <property type="entry name" value="YidC_periplasmic_sf"/>
</dbReference>
<dbReference type="NCBIfam" id="NF002351">
    <property type="entry name" value="PRK01318.1-1"/>
    <property type="match status" value="1"/>
</dbReference>
<dbReference type="NCBIfam" id="NF002352">
    <property type="entry name" value="PRK01318.1-3"/>
    <property type="match status" value="1"/>
</dbReference>
<dbReference type="NCBIfam" id="TIGR03593">
    <property type="entry name" value="yidC_nterm"/>
    <property type="match status" value="1"/>
</dbReference>
<dbReference type="NCBIfam" id="TIGR03592">
    <property type="entry name" value="yidC_oxa1_cterm"/>
    <property type="match status" value="1"/>
</dbReference>
<dbReference type="PANTHER" id="PTHR12428:SF65">
    <property type="entry name" value="CYTOCHROME C OXIDASE ASSEMBLY PROTEIN COX18, MITOCHONDRIAL"/>
    <property type="match status" value="1"/>
</dbReference>
<dbReference type="PANTHER" id="PTHR12428">
    <property type="entry name" value="OXA1"/>
    <property type="match status" value="1"/>
</dbReference>
<dbReference type="Pfam" id="PF02096">
    <property type="entry name" value="60KD_IMP"/>
    <property type="match status" value="1"/>
</dbReference>
<dbReference type="Pfam" id="PF14849">
    <property type="entry name" value="YidC_periplas"/>
    <property type="match status" value="1"/>
</dbReference>
<dbReference type="PRINTS" id="PR00701">
    <property type="entry name" value="60KDINNERMP"/>
</dbReference>
<dbReference type="PRINTS" id="PR01900">
    <property type="entry name" value="YIDCPROTEIN"/>
</dbReference>
<accession>A9KX20</accession>
<keyword id="KW-0997">Cell inner membrane</keyword>
<keyword id="KW-1003">Cell membrane</keyword>
<keyword id="KW-0143">Chaperone</keyword>
<keyword id="KW-0472">Membrane</keyword>
<keyword id="KW-0653">Protein transport</keyword>
<keyword id="KW-0812">Transmembrane</keyword>
<keyword id="KW-1133">Transmembrane helix</keyword>
<keyword id="KW-0813">Transport</keyword>
<name>YIDC_SHEB9</name>